<reference key="1">
    <citation type="submission" date="2007-02" db="EMBL/GenBank/DDBJ databases">
        <title>Complete sequence of Mycobacterium sp. JLS.</title>
        <authorList>
            <consortium name="US DOE Joint Genome Institute"/>
            <person name="Copeland A."/>
            <person name="Lucas S."/>
            <person name="Lapidus A."/>
            <person name="Barry K."/>
            <person name="Detter J.C."/>
            <person name="Glavina del Rio T."/>
            <person name="Hammon N."/>
            <person name="Israni S."/>
            <person name="Dalin E."/>
            <person name="Tice H."/>
            <person name="Pitluck S."/>
            <person name="Chain P."/>
            <person name="Malfatti S."/>
            <person name="Shin M."/>
            <person name="Vergez L."/>
            <person name="Schmutz J."/>
            <person name="Larimer F."/>
            <person name="Land M."/>
            <person name="Hauser L."/>
            <person name="Kyrpides N."/>
            <person name="Mikhailova N."/>
            <person name="Miller C.D."/>
            <person name="Anderson A.J."/>
            <person name="Sims R.C."/>
            <person name="Richardson P."/>
        </authorList>
    </citation>
    <scope>NUCLEOTIDE SEQUENCE [LARGE SCALE GENOMIC DNA]</scope>
    <source>
        <strain>JLS</strain>
    </source>
</reference>
<evidence type="ECO:0000255" key="1">
    <source>
        <dbReference type="HAMAP-Rule" id="MF_01013"/>
    </source>
</evidence>
<accession>A3Q125</accession>
<organism>
    <name type="scientific">Mycobacterium sp. (strain JLS)</name>
    <dbReference type="NCBI Taxonomy" id="164757"/>
    <lineage>
        <taxon>Bacteria</taxon>
        <taxon>Bacillati</taxon>
        <taxon>Actinomycetota</taxon>
        <taxon>Actinomycetes</taxon>
        <taxon>Mycobacteriales</taxon>
        <taxon>Mycobacteriaceae</taxon>
        <taxon>Mycobacterium</taxon>
    </lineage>
</organism>
<protein>
    <recommendedName>
        <fullName evidence="1">Imidazole glycerol phosphate synthase subunit HisF</fullName>
        <ecNumber evidence="1">4.3.2.10</ecNumber>
    </recommendedName>
    <alternativeName>
        <fullName evidence="1">IGP synthase cyclase subunit</fullName>
    </alternativeName>
    <alternativeName>
        <fullName evidence="1">IGP synthase subunit HisF</fullName>
    </alternativeName>
    <alternativeName>
        <fullName evidence="1">ImGP synthase subunit HisF</fullName>
        <shortName evidence="1">IGPS subunit HisF</shortName>
    </alternativeName>
</protein>
<sequence length="261" mass="26927">MAADRGLAVRVIPCLDVDAGRVVKGVNFENLRDAGDPVELAAVYDAEGADELTFLDVTASSSGRSTMLDVVRRTAEQVFIPLTVGGGVRAVADVDALLRAGADKVSVNTAAIARPELLAELARQFGSQCIVLSVDARTVPQGEQPTPSGWEVTTHGGRRGTGIDAVEWATRGAELGVGEILLNSMDFDGTKAGFDLPMLRAVRGAVTVPVIASGGAGAVEHFAPAVHAGADAVLAASVFHFKELTIGQVKAAMAAEGITVR</sequence>
<dbReference type="EC" id="4.3.2.10" evidence="1"/>
<dbReference type="EMBL" id="CP000580">
    <property type="protein sequence ID" value="ABN98852.1"/>
    <property type="molecule type" value="Genomic_DNA"/>
</dbReference>
<dbReference type="SMR" id="A3Q125"/>
<dbReference type="KEGG" id="mjl:Mjls_3073"/>
<dbReference type="HOGENOM" id="CLU_048577_4_0_11"/>
<dbReference type="BioCyc" id="MSP164757:G1G8C-3098-MONOMER"/>
<dbReference type="UniPathway" id="UPA00031">
    <property type="reaction ID" value="UER00010"/>
</dbReference>
<dbReference type="GO" id="GO:0005737">
    <property type="term" value="C:cytoplasm"/>
    <property type="evidence" value="ECO:0007669"/>
    <property type="project" value="UniProtKB-SubCell"/>
</dbReference>
<dbReference type="GO" id="GO:0000107">
    <property type="term" value="F:imidazoleglycerol-phosphate synthase activity"/>
    <property type="evidence" value="ECO:0007669"/>
    <property type="project" value="UniProtKB-UniRule"/>
</dbReference>
<dbReference type="GO" id="GO:0016829">
    <property type="term" value="F:lyase activity"/>
    <property type="evidence" value="ECO:0007669"/>
    <property type="project" value="UniProtKB-KW"/>
</dbReference>
<dbReference type="GO" id="GO:0000105">
    <property type="term" value="P:L-histidine biosynthetic process"/>
    <property type="evidence" value="ECO:0007669"/>
    <property type="project" value="UniProtKB-UniRule"/>
</dbReference>
<dbReference type="CDD" id="cd04731">
    <property type="entry name" value="HisF"/>
    <property type="match status" value="1"/>
</dbReference>
<dbReference type="FunFam" id="3.20.20.70:FF:000006">
    <property type="entry name" value="Imidazole glycerol phosphate synthase subunit HisF"/>
    <property type="match status" value="1"/>
</dbReference>
<dbReference type="Gene3D" id="3.20.20.70">
    <property type="entry name" value="Aldolase class I"/>
    <property type="match status" value="1"/>
</dbReference>
<dbReference type="HAMAP" id="MF_01013">
    <property type="entry name" value="HisF"/>
    <property type="match status" value="1"/>
</dbReference>
<dbReference type="InterPro" id="IPR013785">
    <property type="entry name" value="Aldolase_TIM"/>
</dbReference>
<dbReference type="InterPro" id="IPR006062">
    <property type="entry name" value="His_biosynth"/>
</dbReference>
<dbReference type="InterPro" id="IPR004651">
    <property type="entry name" value="HisF"/>
</dbReference>
<dbReference type="InterPro" id="IPR050064">
    <property type="entry name" value="IGPS_HisA/HisF"/>
</dbReference>
<dbReference type="InterPro" id="IPR011060">
    <property type="entry name" value="RibuloseP-bd_barrel"/>
</dbReference>
<dbReference type="NCBIfam" id="TIGR00735">
    <property type="entry name" value="hisF"/>
    <property type="match status" value="1"/>
</dbReference>
<dbReference type="PANTHER" id="PTHR21235:SF2">
    <property type="entry name" value="IMIDAZOLE GLYCEROL PHOSPHATE SYNTHASE HISHF"/>
    <property type="match status" value="1"/>
</dbReference>
<dbReference type="PANTHER" id="PTHR21235">
    <property type="entry name" value="IMIDAZOLE GLYCEROL PHOSPHATE SYNTHASE SUBUNIT HISF/H IGP SYNTHASE SUBUNIT HISF/H"/>
    <property type="match status" value="1"/>
</dbReference>
<dbReference type="Pfam" id="PF00977">
    <property type="entry name" value="His_biosynth"/>
    <property type="match status" value="1"/>
</dbReference>
<dbReference type="SUPFAM" id="SSF51366">
    <property type="entry name" value="Ribulose-phoshate binding barrel"/>
    <property type="match status" value="1"/>
</dbReference>
<name>HIS6_MYCSJ</name>
<gene>
    <name evidence="1" type="primary">hisF</name>
    <name type="ordered locus">Mjls_3073</name>
</gene>
<keyword id="KW-0028">Amino-acid biosynthesis</keyword>
<keyword id="KW-0963">Cytoplasm</keyword>
<keyword id="KW-0368">Histidine biosynthesis</keyword>
<keyword id="KW-0456">Lyase</keyword>
<feature type="chain" id="PRO_1000063095" description="Imidazole glycerol phosphate synthase subunit HisF">
    <location>
        <begin position="1"/>
        <end position="261"/>
    </location>
</feature>
<feature type="active site" evidence="1">
    <location>
        <position position="16"/>
    </location>
</feature>
<feature type="active site" evidence="1">
    <location>
        <position position="135"/>
    </location>
</feature>
<comment type="function">
    <text evidence="1">IGPS catalyzes the conversion of PRFAR and glutamine to IGP, AICAR and glutamate. The HisF subunit catalyzes the cyclization activity that produces IGP and AICAR from PRFAR using the ammonia provided by the HisH subunit.</text>
</comment>
<comment type="catalytic activity">
    <reaction evidence="1">
        <text>5-[(5-phospho-1-deoxy-D-ribulos-1-ylimino)methylamino]-1-(5-phospho-beta-D-ribosyl)imidazole-4-carboxamide + L-glutamine = D-erythro-1-(imidazol-4-yl)glycerol 3-phosphate + 5-amino-1-(5-phospho-beta-D-ribosyl)imidazole-4-carboxamide + L-glutamate + H(+)</text>
        <dbReference type="Rhea" id="RHEA:24793"/>
        <dbReference type="ChEBI" id="CHEBI:15378"/>
        <dbReference type="ChEBI" id="CHEBI:29985"/>
        <dbReference type="ChEBI" id="CHEBI:58278"/>
        <dbReference type="ChEBI" id="CHEBI:58359"/>
        <dbReference type="ChEBI" id="CHEBI:58475"/>
        <dbReference type="ChEBI" id="CHEBI:58525"/>
        <dbReference type="EC" id="4.3.2.10"/>
    </reaction>
</comment>
<comment type="pathway">
    <text evidence="1">Amino-acid biosynthesis; L-histidine biosynthesis; L-histidine from 5-phospho-alpha-D-ribose 1-diphosphate: step 5/9.</text>
</comment>
<comment type="subunit">
    <text evidence="1">Heterodimer of HisH and HisF.</text>
</comment>
<comment type="subcellular location">
    <subcellularLocation>
        <location evidence="1">Cytoplasm</location>
    </subcellularLocation>
</comment>
<comment type="similarity">
    <text evidence="1">Belongs to the HisA/HisF family.</text>
</comment>
<proteinExistence type="inferred from homology"/>